<sequence>MFPMQFTNSAYRQMEPMFAPGSRGQVQPYRPRTKRRQEPQVGNAAITALANQMSALQLQVAGLAGQARVDRRGPRRVQKNKQKKKNSSNGEKPKEKKKKQKQQEKKGSGGEKVKKTRNRPGKEVRISVKCARQSTFPVYHEGAISGYAVLIGSRVFKPAHVKGKIDHPELADIKFQVAEDMDLEAAAYPKSMRDQAAEPATMMDRVYNWEYGTIRVEDNVIIDASGRGKPGDSGRAITDNSGKVVGIVLGGGPDGRRTRLSVIGFDKKMKAREIAYSDAIPWTRAPALLLLPMVIVCTYNSNTFDCSKPSCQDCCITAEPEKAMTMLKDNLNDPNYWDLLIAVTTCGSARRKRAVSTSPAAFYDTQILAAHAAASPYRAYCPDCDGTACISPIAIDEVVSSGSDHVLRMRVGSQSGVTAKGGAAGETSLRYLGRDGKVHAADNTRLVVRTTAKCDVLQATGHYILANCPVGQSLTVAATLDGTRHQCTTVFEHQVTEKFTRERSKGHHLSDMTKKCTRFSTTPKKSALYLVDVYDALPISVEISTVVTCSDSQCTVRVPPGTTVKFDKKCKSADSATVTFTSDSQTFTCEEPVLTAASITQGKPHLRSAMLPSGGKEVKARIPFPFPPETATCRVSVAPLPSITYEESDVLLAGTAKYPVLLTTRNLGFHSNATSEWIQGKYLRRIPVTPQGIELTWGNNAPMHFWSSVRYASGDADAYPWELLVYHTKHHPEYAWAFVGVACGLLAIAACMFACACSRVRYSLVANTFNSNPPPLTALTAALCCIPGARADQPYLDIIAYLWTNSKVAFGLQFAAPVACVLIITYALRHCRLCCKSFLGVRGWSALLVILAYVQSCKSYEHTVVVPMDPRAPSYEAVINRNGYDPLKLTISVNFTVISPTTALEYWTCAGVPIVEPPHVGCCTSVSCPSDLSTLHAFTGKAVSDVHCDVHTNVYPLLWGAAHCFCSTENTQVSAVAATVSEFCAQDSERAEAFSVHSSSVTAEVLVTLGEVVTAVHVYVDGVTSARGTDLKIVAGPITTDYSPFDRKVVRIGEEVYNYDWPPYGAGRPGTFGDIQARSTNYVKPNDLYGDIGIEVLQPTNDHVHVAYTYTTSGLLRWLQDAPKPLSVTAPHGCKISANPLLALDCGVGAVPMSINIPDAKFTRKLKDPKPSALKCVVDSCEYGVDYGGAATITYEGHEAGKCGIHSLTPGVPLRTSVVEVVAGANTVKTTFSSPTPEVALEVEICSAIVKCAGECTPPKEHVVATRPRHGSDPGGYISGPAMRWAGGIVGTLVVLFLILAVIYCVVKKCRSKRIRIVKS</sequence>
<organismHost>
    <name type="scientific">Oncorhynchus mykiss</name>
    <name type="common">Rainbow trout</name>
    <name type="synonym">Salmo gairdneri</name>
    <dbReference type="NCBI Taxonomy" id="8022"/>
</organismHost>
<organismHost>
    <name type="scientific">Salmo salar</name>
    <name type="common">Atlantic salmon</name>
    <dbReference type="NCBI Taxonomy" id="8030"/>
</organismHost>
<proteinExistence type="inferred from homology"/>
<keyword id="KW-0167">Capsid protein</keyword>
<keyword id="KW-0165">Cleavage on pair of basic residues</keyword>
<keyword id="KW-1015">Disulfide bond</keyword>
<keyword id="KW-1170">Fusion of virus membrane with host endosomal membrane</keyword>
<keyword id="KW-1168">Fusion of virus membrane with host membrane</keyword>
<keyword id="KW-0325">Glycoprotein</keyword>
<keyword id="KW-1032">Host cell membrane</keyword>
<keyword id="KW-1035">Host cytoplasm</keyword>
<keyword id="KW-1038">Host endoplasmic reticulum</keyword>
<keyword id="KW-1040">Host Golgi apparatus</keyword>
<keyword id="KW-1043">Host membrane</keyword>
<keyword id="KW-1048">Host nucleus</keyword>
<keyword id="KW-0945">Host-virus interaction</keyword>
<keyword id="KW-0378">Hydrolase</keyword>
<keyword id="KW-0407">Ion channel</keyword>
<keyword id="KW-0406">Ion transport</keyword>
<keyword id="KW-0449">Lipoprotein</keyword>
<keyword id="KW-0472">Membrane</keyword>
<keyword id="KW-0564">Palmitate</keyword>
<keyword id="KW-0645">Protease</keyword>
<keyword id="KW-0694">RNA-binding</keyword>
<keyword id="KW-0720">Serine protease</keyword>
<keyword id="KW-1144">T=4 icosahedral capsid protein</keyword>
<keyword id="KW-0812">Transmembrane</keyword>
<keyword id="KW-1133">Transmembrane helix</keyword>
<keyword id="KW-0813">Transport</keyword>
<keyword id="KW-1161">Viral attachment to host cell</keyword>
<keyword id="KW-1234">Viral attachment to host entry receptor</keyword>
<keyword id="KW-1182">Viral ion channel</keyword>
<keyword id="KW-1162">Viral penetration into host cytoplasm</keyword>
<keyword id="KW-0946">Virion</keyword>
<keyword id="KW-1160">Virus entry into host cell</keyword>
<organism>
    <name type="scientific">Alphavirus salmon subtype 1</name>
    <name type="common">SAV1</name>
    <name type="synonym">Salmon pancreas disease virus subtype 1</name>
    <dbReference type="NCBI Taxonomy" id="84589"/>
    <lineage>
        <taxon>Viruses</taxon>
        <taxon>Riboviria</taxon>
        <taxon>Orthornavirae</taxon>
        <taxon>Kitrinoviricota</taxon>
        <taxon>Alsuviricetes</taxon>
        <taxon>Martellivirales</taxon>
        <taxon>Togaviridae</taxon>
        <taxon>Alphavirus</taxon>
    </lineage>
</organism>
<dbReference type="EC" id="3.4.21.90" evidence="2"/>
<dbReference type="EMBL" id="AJ316244">
    <property type="protein sequence ID" value="CAC87722.1"/>
    <property type="molecule type" value="Genomic_RNA"/>
</dbReference>
<dbReference type="RefSeq" id="NP_647497.1">
    <property type="nucleotide sequence ID" value="NC_003930.1"/>
</dbReference>
<dbReference type="SMR" id="Q8JJX0"/>
<dbReference type="GeneID" id="2193532"/>
<dbReference type="KEGG" id="vg:2193532"/>
<dbReference type="Proteomes" id="UP000007227">
    <property type="component" value="Genome"/>
</dbReference>
<dbReference type="GO" id="GO:0030430">
    <property type="term" value="C:host cell cytoplasm"/>
    <property type="evidence" value="ECO:0007669"/>
    <property type="project" value="UniProtKB-SubCell"/>
</dbReference>
<dbReference type="GO" id="GO:0042025">
    <property type="term" value="C:host cell nucleus"/>
    <property type="evidence" value="ECO:0007669"/>
    <property type="project" value="UniProtKB-SubCell"/>
</dbReference>
<dbReference type="GO" id="GO:0020002">
    <property type="term" value="C:host cell plasma membrane"/>
    <property type="evidence" value="ECO:0007669"/>
    <property type="project" value="UniProtKB-SubCell"/>
</dbReference>
<dbReference type="GO" id="GO:0016020">
    <property type="term" value="C:membrane"/>
    <property type="evidence" value="ECO:0007669"/>
    <property type="project" value="UniProtKB-KW"/>
</dbReference>
<dbReference type="GO" id="GO:0039619">
    <property type="term" value="C:T=4 icosahedral viral capsid"/>
    <property type="evidence" value="ECO:0007669"/>
    <property type="project" value="UniProtKB-KW"/>
</dbReference>
<dbReference type="GO" id="GO:0055036">
    <property type="term" value="C:virion membrane"/>
    <property type="evidence" value="ECO:0007669"/>
    <property type="project" value="UniProtKB-SubCell"/>
</dbReference>
<dbReference type="GO" id="GO:0003723">
    <property type="term" value="F:RNA binding"/>
    <property type="evidence" value="ECO:0007669"/>
    <property type="project" value="UniProtKB-KW"/>
</dbReference>
<dbReference type="GO" id="GO:0004252">
    <property type="term" value="F:serine-type endopeptidase activity"/>
    <property type="evidence" value="ECO:0007669"/>
    <property type="project" value="InterPro"/>
</dbReference>
<dbReference type="GO" id="GO:0005198">
    <property type="term" value="F:structural molecule activity"/>
    <property type="evidence" value="ECO:0007669"/>
    <property type="project" value="InterPro"/>
</dbReference>
<dbReference type="GO" id="GO:0039654">
    <property type="term" value="P:fusion of virus membrane with host endosome membrane"/>
    <property type="evidence" value="ECO:0007669"/>
    <property type="project" value="UniProtKB-KW"/>
</dbReference>
<dbReference type="GO" id="GO:0006508">
    <property type="term" value="P:proteolysis"/>
    <property type="evidence" value="ECO:0007669"/>
    <property type="project" value="UniProtKB-KW"/>
</dbReference>
<dbReference type="GO" id="GO:0046718">
    <property type="term" value="P:symbiont entry into host cell"/>
    <property type="evidence" value="ECO:0007669"/>
    <property type="project" value="UniProtKB-KW"/>
</dbReference>
<dbReference type="GO" id="GO:0039722">
    <property type="term" value="P:symbiont-mediated suppression of host toll-like receptor signaling pathway"/>
    <property type="evidence" value="ECO:0000250"/>
    <property type="project" value="UniProtKB"/>
</dbReference>
<dbReference type="GO" id="GO:0019062">
    <property type="term" value="P:virion attachment to host cell"/>
    <property type="evidence" value="ECO:0007669"/>
    <property type="project" value="UniProtKB-KW"/>
</dbReference>
<dbReference type="Gene3D" id="1.10.287.2230">
    <property type="match status" value="1"/>
</dbReference>
<dbReference type="Gene3D" id="2.60.40.350">
    <property type="match status" value="1"/>
</dbReference>
<dbReference type="Gene3D" id="2.60.40.3200">
    <property type="entry name" value="Alphavirus E2 glycoprotein, A domain"/>
    <property type="match status" value="1"/>
</dbReference>
<dbReference type="Gene3D" id="2.60.40.4310">
    <property type="entry name" value="Alphavirus E2 glycoprotein, domain B"/>
    <property type="match status" value="1"/>
</dbReference>
<dbReference type="Gene3D" id="2.60.40.2400">
    <property type="entry name" value="Alphavirus E2 glycoprotein, domain C"/>
    <property type="match status" value="1"/>
</dbReference>
<dbReference type="Gene3D" id="2.60.98.10">
    <property type="entry name" value="Tick-borne Encephalitis virus Glycoprotein, domain 1"/>
    <property type="match status" value="3"/>
</dbReference>
<dbReference type="Gene3D" id="2.40.10.10">
    <property type="entry name" value="Trypsin-like serine proteases"/>
    <property type="match status" value="2"/>
</dbReference>
<dbReference type="InterPro" id="IPR002548">
    <property type="entry name" value="Alpha_E1_glycop"/>
</dbReference>
<dbReference type="InterPro" id="IPR000936">
    <property type="entry name" value="Alpha_E2_glycop"/>
</dbReference>
<dbReference type="InterPro" id="IPR002533">
    <property type="entry name" value="Alpha_E3_glycop"/>
</dbReference>
<dbReference type="InterPro" id="IPR042304">
    <property type="entry name" value="Alphavir_E2_A"/>
</dbReference>
<dbReference type="InterPro" id="IPR042305">
    <property type="entry name" value="Alphavir_E2_B"/>
</dbReference>
<dbReference type="InterPro" id="IPR042306">
    <property type="entry name" value="Alphavir_E2_C"/>
</dbReference>
<dbReference type="InterPro" id="IPR000336">
    <property type="entry name" value="Flavivir/Alphavir_Ig-like_sf"/>
</dbReference>
<dbReference type="InterPro" id="IPR036253">
    <property type="entry name" value="Glycoprot_cen/dimer_sf"/>
</dbReference>
<dbReference type="InterPro" id="IPR038055">
    <property type="entry name" value="Glycoprot_E_dimer_dom"/>
</dbReference>
<dbReference type="InterPro" id="IPR014756">
    <property type="entry name" value="Ig_E-set"/>
</dbReference>
<dbReference type="InterPro" id="IPR009003">
    <property type="entry name" value="Peptidase_S1_PA"/>
</dbReference>
<dbReference type="InterPro" id="IPR043504">
    <property type="entry name" value="Peptidase_S1_PA_chymotrypsin"/>
</dbReference>
<dbReference type="InterPro" id="IPR000930">
    <property type="entry name" value="Peptidase_S3"/>
</dbReference>
<dbReference type="Pfam" id="PF01589">
    <property type="entry name" value="Alpha_E1_glycop"/>
    <property type="match status" value="1"/>
</dbReference>
<dbReference type="Pfam" id="PF00943">
    <property type="entry name" value="Alpha_E2_glycop"/>
    <property type="match status" value="1"/>
</dbReference>
<dbReference type="Pfam" id="PF01563">
    <property type="entry name" value="Alpha_E3_glycop"/>
    <property type="match status" value="1"/>
</dbReference>
<dbReference type="Pfam" id="PF00944">
    <property type="entry name" value="Peptidase_S3"/>
    <property type="match status" value="1"/>
</dbReference>
<dbReference type="PRINTS" id="PR00798">
    <property type="entry name" value="TOGAVIRIN"/>
</dbReference>
<dbReference type="SUPFAM" id="SSF81296">
    <property type="entry name" value="E set domains"/>
    <property type="match status" value="1"/>
</dbReference>
<dbReference type="SUPFAM" id="SSF50494">
    <property type="entry name" value="Trypsin-like serine proteases"/>
    <property type="match status" value="1"/>
</dbReference>
<dbReference type="SUPFAM" id="SSF56983">
    <property type="entry name" value="Viral glycoprotein, central and dimerisation domains"/>
    <property type="match status" value="1"/>
</dbReference>
<dbReference type="PROSITE" id="PS51690">
    <property type="entry name" value="ALPHAVIRUS_CP"/>
    <property type="match status" value="1"/>
</dbReference>
<protein>
    <recommendedName>
        <fullName>Structural polyprotein</fullName>
    </recommendedName>
    <alternativeName>
        <fullName>p130</fullName>
    </alternativeName>
    <component>
        <recommendedName>
            <fullName>Capsid protein</fullName>
            <ecNumber evidence="2">3.4.21.90</ecNumber>
        </recommendedName>
        <alternativeName>
            <fullName>Coat protein</fullName>
            <shortName>C</shortName>
        </alternativeName>
    </component>
    <component>
        <recommendedName>
            <fullName>Precursor of protein E3/E2</fullName>
        </recommendedName>
        <alternativeName>
            <fullName>p62</fullName>
        </alternativeName>
        <alternativeName>
            <fullName>pE2</fullName>
        </alternativeName>
    </component>
    <component>
        <recommendedName>
            <fullName>Assembly protein E3</fullName>
        </recommendedName>
    </component>
    <component>
        <recommendedName>
            <fullName>Spike glycoprotein E2</fullName>
        </recommendedName>
        <alternativeName>
            <fullName>E2 envelope glycoprotein</fullName>
        </alternativeName>
    </component>
    <component>
        <recommendedName>
            <fullName>6K protein</fullName>
        </recommendedName>
    </component>
    <component>
        <recommendedName>
            <fullName>Spike glycoprotein E1</fullName>
        </recommendedName>
        <alternativeName>
            <fullName>E1 envelope glycoprotein</fullName>
        </alternativeName>
    </component>
</protein>
<name>POLS_SAV1</name>
<evidence type="ECO:0000250" key="1"/>
<evidence type="ECO:0000250" key="2">
    <source>
        <dbReference type="UniProtKB" id="P03315"/>
    </source>
</evidence>
<evidence type="ECO:0000250" key="3">
    <source>
        <dbReference type="UniProtKB" id="P03316"/>
    </source>
</evidence>
<evidence type="ECO:0000250" key="4">
    <source>
        <dbReference type="UniProtKB" id="P08768"/>
    </source>
</evidence>
<evidence type="ECO:0000250" key="5">
    <source>
        <dbReference type="UniProtKB" id="P09592"/>
    </source>
</evidence>
<evidence type="ECO:0000250" key="6">
    <source>
        <dbReference type="UniProtKB" id="P0DOK1"/>
    </source>
</evidence>
<evidence type="ECO:0000250" key="7">
    <source>
        <dbReference type="UniProtKB" id="P13897"/>
    </source>
</evidence>
<evidence type="ECO:0000250" key="8">
    <source>
        <dbReference type="UniProtKB" id="P27284"/>
    </source>
</evidence>
<evidence type="ECO:0000250" key="9">
    <source>
        <dbReference type="UniProtKB" id="Q5XXP3"/>
    </source>
</evidence>
<evidence type="ECO:0000250" key="10">
    <source>
        <dbReference type="UniProtKB" id="Q86925"/>
    </source>
</evidence>
<evidence type="ECO:0000250" key="11">
    <source>
        <dbReference type="UniProtKB" id="Q8JUX5"/>
    </source>
</evidence>
<evidence type="ECO:0000255" key="12"/>
<evidence type="ECO:0000255" key="13">
    <source>
        <dbReference type="PROSITE-ProRule" id="PRU01027"/>
    </source>
</evidence>
<evidence type="ECO:0000256" key="14">
    <source>
        <dbReference type="SAM" id="MobiDB-lite"/>
    </source>
</evidence>
<feature type="chain" id="PRO_0000238778" description="Capsid protein" evidence="1">
    <location>
        <begin position="1"/>
        <end position="282"/>
    </location>
</feature>
<feature type="chain" id="PRO_0000238779" description="Precursor of protein E3/E2" evidence="1">
    <location>
        <begin position="283"/>
        <end position="791"/>
    </location>
</feature>
<feature type="chain" id="PRO_0000238780" description="Assembly protein E3" evidence="1">
    <location>
        <begin position="283"/>
        <end position="353"/>
    </location>
</feature>
<feature type="chain" id="PRO_0000238781" description="Spike glycoprotein E2" evidence="1">
    <location>
        <begin position="354"/>
        <end position="791"/>
    </location>
</feature>
<feature type="chain" id="PRO_0000238782" description="6K protein" evidence="1">
    <location>
        <begin position="792"/>
        <end position="859"/>
    </location>
</feature>
<feature type="chain" id="PRO_0000238783" description="Spike glycoprotein E1" evidence="1">
    <location>
        <begin position="860"/>
        <end position="1320"/>
    </location>
</feature>
<feature type="topological domain" description="Extracellular" evidence="12">
    <location>
        <begin position="1"/>
        <end position="734"/>
    </location>
</feature>
<feature type="transmembrane region" description="Helical" evidence="12">
    <location>
        <begin position="735"/>
        <end position="755"/>
    </location>
</feature>
<feature type="topological domain" description="Cytoplasmic" evidence="12">
    <location>
        <begin position="756"/>
        <end position="791"/>
    </location>
</feature>
<feature type="topological domain" description="Extracellular" evidence="12">
    <location>
        <begin position="792"/>
        <end position="807"/>
    </location>
</feature>
<feature type="transmembrane region" description="Helical" evidence="12">
    <location>
        <begin position="808"/>
        <end position="828"/>
    </location>
</feature>
<feature type="topological domain" description="Cytoplasmic" evidence="12">
    <location>
        <begin position="829"/>
        <end position="836"/>
    </location>
</feature>
<feature type="transmembrane region" description="Helical" evidence="12">
    <location>
        <begin position="837"/>
        <end position="857"/>
    </location>
</feature>
<feature type="topological domain" description="Extracellular" evidence="12">
    <location>
        <begin position="858"/>
        <end position="1286"/>
    </location>
</feature>
<feature type="transmembrane region" description="Helical" evidence="12">
    <location>
        <begin position="1287"/>
        <end position="1307"/>
    </location>
</feature>
<feature type="topological domain" description="Cytoplasmic" evidence="12">
    <location>
        <begin position="1308"/>
        <end position="1320"/>
    </location>
</feature>
<feature type="domain" description="Peptidase S3" evidence="13">
    <location>
        <begin position="134"/>
        <end position="282"/>
    </location>
</feature>
<feature type="region of interest" description="Disordered" evidence="14">
    <location>
        <begin position="17"/>
        <end position="41"/>
    </location>
</feature>
<feature type="region of interest" description="Host transcription inhibition" evidence="5">
    <location>
        <begin position="48"/>
        <end position="81"/>
    </location>
</feature>
<feature type="region of interest" description="Disordered" evidence="14">
    <location>
        <begin position="65"/>
        <end position="125"/>
    </location>
</feature>
<feature type="region of interest" description="Binding to the viral RNA" evidence="8">
    <location>
        <begin position="101"/>
        <end position="135"/>
    </location>
</feature>
<feature type="region of interest" description="Ribosome-binding" evidence="8">
    <location>
        <begin position="120"/>
        <end position="134"/>
    </location>
</feature>
<feature type="region of interest" description="Dimerization of the capsid protein" evidence="6">
    <location>
        <begin position="203"/>
        <end position="213"/>
    </location>
</feature>
<feature type="region of interest" description="Dimerization of the capsid protein" evidence="6">
    <location>
        <begin position="239"/>
        <end position="243"/>
    </location>
</feature>
<feature type="region of interest" description="Functions as an uncleaved signal peptide for the precursor of protein E3/E2" evidence="2">
    <location>
        <begin position="283"/>
        <end position="302"/>
    </location>
</feature>
<feature type="region of interest" description="Transient transmembrane before p62-6K protein processing" evidence="12">
    <location>
        <begin position="760"/>
        <end position="784"/>
    </location>
</feature>
<feature type="region of interest" description="E1 fusion peptide loop" evidence="11">
    <location>
        <begin position="954"/>
        <end position="971"/>
    </location>
</feature>
<feature type="short sequence motif" description="Nuclear localization signal" evidence="5">
    <location>
        <begin position="74"/>
        <end position="120"/>
    </location>
</feature>
<feature type="short sequence motif" description="Nuclear export signal" evidence="5">
    <location>
        <begin position="165"/>
        <end position="175"/>
    </location>
</feature>
<feature type="compositionally biased region" description="Basic residues" evidence="14">
    <location>
        <begin position="73"/>
        <end position="86"/>
    </location>
</feature>
<feature type="compositionally biased region" description="Basic and acidic residues" evidence="14">
    <location>
        <begin position="101"/>
        <end position="113"/>
    </location>
</feature>
<feature type="active site" description="Charge relay system" evidence="13">
    <location>
        <position position="160"/>
    </location>
</feature>
<feature type="active site" description="Charge relay system" evidence="13">
    <location>
        <position position="182"/>
    </location>
</feature>
<feature type="active site" description="Charge relay system" evidence="13">
    <location>
        <position position="233"/>
    </location>
</feature>
<feature type="site" description="Involved in dimerization of the capsid protein" evidence="10">
    <location>
        <position position="207"/>
    </location>
</feature>
<feature type="site" description="Involved in dimerization of the capsid protein" evidence="10">
    <location>
        <position position="240"/>
    </location>
</feature>
<feature type="site" description="Cleavage; by autolysis" evidence="2">
    <location>
        <begin position="282"/>
        <end position="283"/>
    </location>
</feature>
<feature type="site" description="Cleavage; by host furin" evidence="2">
    <location>
        <begin position="353"/>
        <end position="354"/>
    </location>
</feature>
<feature type="site" description="Cleavage; by host signal peptidase" evidence="1">
    <location>
        <begin position="353"/>
        <end position="354"/>
    </location>
</feature>
<feature type="site" description="Cleavage; by host signal peptidase" evidence="2">
    <location>
        <begin position="791"/>
        <end position="792"/>
    </location>
</feature>
<feature type="site" description="Cleavage; by host signal peptidase" evidence="2">
    <location>
        <begin position="859"/>
        <end position="860"/>
    </location>
</feature>
<feature type="lipid moiety-binding region" description="S-palmitoyl cysteine; by host" evidence="3">
    <location>
        <position position="784"/>
    </location>
</feature>
<feature type="lipid moiety-binding region" description="S-palmitoyl cysteine; by host" evidence="3">
    <location>
        <position position="785"/>
    </location>
</feature>
<feature type="lipid moiety-binding region" description="S-stearoyl cysteine; by host" evidence="2">
    <location>
        <position position="1310"/>
    </location>
</feature>
<feature type="disulfide bond" evidence="4">
    <location>
        <begin position="297"/>
        <end position="306"/>
    </location>
</feature>
<feature type="disulfide bond" evidence="7">
    <location>
        <begin position="381"/>
        <end position="487"/>
    </location>
</feature>
<feature type="disulfide bond" evidence="7">
    <location>
        <begin position="384"/>
        <end position="389"/>
    </location>
</feature>
<feature type="disulfide bond" evidence="7">
    <location>
        <begin position="454"/>
        <end position="468"/>
    </location>
</feature>
<feature type="disulfide bond" evidence="7">
    <location>
        <begin position="516"/>
        <end position="633"/>
    </location>
</feature>
<feature type="disulfide bond" evidence="7">
    <location>
        <begin position="909"/>
        <end position="984"/>
    </location>
</feature>
<feature type="disulfide bond" evidence="7">
    <location>
        <begin position="922"/>
        <end position="964"/>
    </location>
</feature>
<feature type="disulfide bond" evidence="7">
    <location>
        <begin position="923"/>
        <end position="966"/>
    </location>
</feature>
<feature type="disulfide bond" evidence="7">
    <location>
        <begin position="928"/>
        <end position="948"/>
    </location>
</feature>
<feature type="disulfide bond" evidence="7">
    <location>
        <begin position="1134"/>
        <end position="1146"/>
    </location>
</feature>
<feature type="disulfide bond" evidence="7">
    <location>
        <begin position="1176"/>
        <end position="1252"/>
    </location>
</feature>
<feature type="disulfide bond" evidence="7">
    <location>
        <begin position="1181"/>
        <end position="1256"/>
    </location>
</feature>
<feature type="disulfide bond" evidence="7">
    <location>
        <begin position="1203"/>
        <end position="1246"/>
    </location>
</feature>
<comment type="function">
    <molecule>Capsid protein</molecule>
    <text evidence="2 3 8">Forms an icosahedral capsid with a T=4 symmetry composed of 240 copies of the capsid protein surrounded by a lipid membrane through which penetrate 80 spikes composed of trimers of E1-E2 heterodimers (By similarity). The capsid protein binds to the viral RNA genome at a site adjacent to a ribosome binding site for viral genome translation following genome release (By similarity). Possesses a protease activity that results in its autocatalytic cleavage from the nascent structural protein (By similarity). Following its self-cleavage, the capsid protein transiently associates with ribosomes, and within several minutes the protein binds to viral RNA and rapidly assembles into icosahedric core particles (By similarity). The resulting nucleocapsid eventually associates with the cytoplasmic domain of the spike glycoprotein E2 at the cell membrane, leading to budding and formation of mature virions (By similarity). In case of infection, new virions attach to target cells and after clathrin-mediated endocytosis their membrane fuses with the host endosomal membrane (By similarity). This leads to the release of the nucleocapsid into the cytoplasm, followed by an uncoating event necessary for the genomic RNA to become accessible (By similarity). The uncoating might be triggered by the interaction of capsid proteins with ribosomes (By similarity). Binding of ribosomes would release the genomic RNA since the same region is genomic RNA-binding and ribosome-binding (By similarity). Specifically inhibits interleukin-1 receptor-associated kinase 1/IRAK1-dependent signaling during viral entry, representing a means by which the alphaviruses may evade innate immune detection and activation prior to viral gene expression (By similarity).</text>
</comment>
<comment type="function">
    <molecule>Assembly protein E3</molecule>
    <text evidence="2">Provides the signal sequence for the translocation of the precursor of protein E3/E2 to the host endoplasmic reticulum. Furin-cleaved E3 remains associated with spike glycoprotein E1 and mediates pH protection of the latter during the transport via the secretory pathway. After virion release from the host cell, the assembly protein E3 is gradually released in the extracellular space.</text>
</comment>
<comment type="function">
    <molecule>Spike glycoprotein E2</molecule>
    <text evidence="3">Plays a role in viral attachment to target host cell, by binding to the cell receptor. Synthesized as a p62 precursor which is processed by furin at the cell membrane just before virion budding, giving rise to E2-E1 heterodimer. The p62-E1 heterodimer is stable, whereas E2-E1 is unstable and dissociate at low pH. p62 is processed at the last step, presumably to avoid E1 fusion activation before its final export to cell surface. E2 C-terminus contains a transitory transmembrane that would be disrupted by palmitoylation, resulting in reorientation of the C-terminal tail from lumenal to cytoplasmic side. This step is critical since E2 C-terminus is involved in budding by interacting with capsid proteins. This release of E2 C-terminus in cytoplasm occurs lately in protein export, and precludes premature assembly of particles at the endoplasmic reticulum membrane.</text>
</comment>
<comment type="function">
    <molecule>6K protein</molecule>
    <text evidence="2 3">Acts as a viroporin that participates in virus glycoprotein processing and transport to the plasma membrane, cell permeabilization and budding of viral particles (By similarity). Disrupts the calcium homeostasis of the cell, probably at the endoplasmic reticulum level (By similarity). This leads to cytoplasmic calcium elevation (By similarity). Because of its lipophilic properties, the 6K protein is postulated to influence the selection of lipids that interact with the transmembrane domains of the glycoproteins, which, in turn, affects the deformability of the bilayer required for the extreme curvature that occurs as budding proceeds. Present in low amount in virions, about 3% compared to viral glycoproteins (By similarity).</text>
</comment>
<comment type="function">
    <molecule>Spike glycoprotein E1</molecule>
    <text evidence="2">Class II viral fusion protein. Fusion activity is inactive as long as E1 is bound to E2 in mature virion. After virus attachment to target cell and endocytosis, acidification of the endosome induce dissociation of E1/E2 heterodimer and concomitant trimerization of the E1 subunits. This E1 trimer is fusion active, and promotes release of viral nucleocapsid in cytoplasm after endosome and viral membrane fusion. Efficient fusion requires the presence of cholesterol and sphingolipid in the target membrane.</text>
</comment>
<comment type="catalytic activity">
    <reaction evidence="2">
        <text>Autocatalytic release of the core protein from the N-terminus of the togavirus structural polyprotein by hydrolysis of a -Trp-|-Ser- bond.</text>
        <dbReference type="EC" id="3.4.21.90"/>
    </reaction>
</comment>
<comment type="subunit">
    <molecule>Capsid protein</molecule>
    <text evidence="3 10 11">Homodimer (By similarity). Homomultimer (By similarity). Interacts with host karyopherin KPNA4; this interaction allows the nuclear import of the viral capsid protein (By similarity). Interacts with spike glycoprotein E2 (By similarity). Interacts with host IRAK1; the interaction leads to inhibition of IRAK1-dependent signaling (By similarity).</text>
</comment>
<comment type="subunit">
    <molecule>Precursor of protein E3/E2</molecule>
    <text evidence="2 3 6 11">The precursor of protein E3/E2 and E1 form a heterodimer shortly after synthesis (By similarity).</text>
</comment>
<comment type="subunit">
    <molecule>Spike glycoprotein E1</molecule>
    <text evidence="3 11">Interacts with spike glycoprotein E2 (By similarity). The precursor of protein E3/E2 and E1 form a heterodimer shortly after synthesis (By similarity). Processing of the precursor of protein E3/E2 into E2 and E3 results in a heterodimer of the spike glycoproteins E2 and E1 (By similarity). Spike at virion surface are constituted of three E2-E1 heterodimers (By similarity). After target cell attachment and endocytosis, E1 change conformation to form homotrimers (By similarity). Interacts with 6K protein (By similarity).</text>
</comment>
<comment type="subunit">
    <molecule>Spike glycoprotein E2</molecule>
    <text evidence="3">Interacts with spike glycoprotein E1 (By similarity). Processing of the precursor of protein E3/E2 into E2 and E3 results in a heterodimer of the spike glycoproteins E2 and E1 (By similarity). Spike at virion surface are constituted of a trimer of E2-E1 heterodimers (By similarity). Interacts with 6K protein (By similarity).</text>
</comment>
<comment type="subunit">
    <molecule>6K protein</molecule>
    <text evidence="3 9">Oligomer (By similarity). Interacts with spike glycoprotein E1. Interacts with spike glycoprotein E2 (By similarity).</text>
</comment>
<comment type="subcellular location">
    <molecule>Capsid protein</molecule>
    <subcellularLocation>
        <location evidence="3">Virion</location>
    </subcellularLocation>
    <subcellularLocation>
        <location evidence="11">Host cytoplasm</location>
    </subcellularLocation>
    <subcellularLocation>
        <location evidence="3">Host cell membrane</location>
    </subcellularLocation>
    <subcellularLocation>
        <location evidence="11">Host nucleus</location>
    </subcellularLocation>
    <text evidence="11">Shuttles between the cytoplasm and the nucleus.</text>
</comment>
<comment type="subcellular location">
    <molecule>Spike glycoprotein E2</molecule>
    <subcellularLocation>
        <location evidence="11">Virion membrane</location>
        <topology evidence="12">Single-pass type I membrane protein</topology>
    </subcellularLocation>
    <subcellularLocation>
        <location evidence="3">Host cell membrane</location>
        <topology evidence="11">Single-pass type I membrane protein</topology>
    </subcellularLocation>
</comment>
<comment type="subcellular location">
    <molecule>6K protein</molecule>
    <subcellularLocation>
        <location evidence="3">Host cell membrane</location>
        <topology evidence="12">Multi-pass membrane protein</topology>
    </subcellularLocation>
    <subcellularLocation>
        <location evidence="3">Virion membrane</location>
        <topology evidence="12">Multi-pass membrane protein</topology>
    </subcellularLocation>
    <subcellularLocation>
        <location evidence="3">Host Golgi apparatus</location>
    </subcellularLocation>
    <subcellularLocation>
        <location>Host Golgi apparatus</location>
        <location>Host trans-Golgi network</location>
    </subcellularLocation>
    <subcellularLocation>
        <location evidence="3">Host endoplasmic reticulum</location>
    </subcellularLocation>
</comment>
<comment type="subcellular location">
    <molecule>Spike glycoprotein E1</molecule>
    <subcellularLocation>
        <location evidence="11">Virion membrane</location>
        <topology evidence="12">Single-pass type I membrane protein</topology>
    </subcellularLocation>
    <subcellularLocation>
        <location evidence="3 11">Host cell membrane</location>
        <topology evidence="12">Single-pass type I membrane protein</topology>
    </subcellularLocation>
</comment>
<comment type="domain">
    <molecule>Capsid protein</molecule>
    <text evidence="3 5">The very N-terminus also plays a role in the particle assembly process (By similarity). The N-terminus also contains a nuclear localization signal and a supra nuclear export signal (supraNES), which is an unusually strong NES that mediates host CRM1 binding in the absence of RanGTP and thus can bind CRM1, not only in the nucleus, but also in the cytoplasm (By similarity). The C-terminus functions as a protease during translation to cleave itself from the translating structural polyprotein (By similarity).</text>
</comment>
<comment type="domain">
    <text evidence="2">Structural polyprotein: As soon as the capsid protein has been autocleaved, an internal uncleaved signal peptide directs the remaining polyprotein to the endoplasmic reticulum.</text>
</comment>
<comment type="PTM">
    <text evidence="2">Structural polyprotein: Specific enzymatic cleavages in vivo yield mature proteins. Capsid protein is auto-cleaved during polyprotein translation, unmasking a signal peptide at the N-terminus of the precursor of E3/E2 (By similarity). The remaining polyprotein is then targeted to the host endoplasmic reticulum, where host signal peptidase cleaves it into pE2, 6K and E1 proteins. pE2 is further processed to mature E3 and E2 by host furin in trans-Golgi vesicle (By similarity).</text>
</comment>
<comment type="PTM">
    <molecule>Spike glycoprotein E2</molecule>
    <text evidence="2">Palmitoylated via thioester bonds. These palmitoylations may induce disruption of the C-terminus transmembrane. This would result in the reorientation of E2 C-terminus from lumenal to cytoplasmic side.</text>
</comment>
<comment type="PTM">
    <molecule>Spike glycoprotein E1</molecule>
    <text evidence="2">N-glycosylated.</text>
</comment>
<comment type="PTM">
    <molecule>Spike glycoprotein E2</molecule>
    <text evidence="2">N-glycosylated.</text>
</comment>
<comment type="PTM">
    <molecule>Assembly protein E3</molecule>
    <text evidence="2">N-glycosylated.</text>
</comment>
<comment type="PTM">
    <molecule>6K protein</molecule>
    <text evidence="2">Palmitoylated via thioester bonds.</text>
</comment>
<comment type="miscellaneous">
    <text evidence="10">Structural polyprotein: Translated from a subgenomic RNA synthesized during togavirus replication.</text>
</comment>
<reference key="1">
    <citation type="journal article" date="2002" name="J. Virol.">
        <title>Comparison of two aquatic alphaviruses, Salmon pancreas disease virus and Sleeping disease virus, by using genome sequence analysis, monoclonal reactivity and cross-infection.</title>
        <authorList>
            <person name="Weston J.H."/>
            <person name="Villoing S."/>
            <person name="Bremont M."/>
            <person name="Castric J."/>
            <person name="Pfeffer M."/>
            <person name="Jewhurst V."/>
            <person name="McLoughlin M."/>
            <person name="Rodseth O."/>
            <person name="Christie K.E."/>
            <person name="Koumans J."/>
            <person name="Todd D."/>
        </authorList>
    </citation>
    <scope>NUCLEOTIDE SEQUENCE [GENOMIC RNA]</scope>
    <source>
        <strain>Isolate F93-125</strain>
    </source>
</reference>
<accession>Q8JJX0</accession>